<name>RL30_OPHHA</name>
<evidence type="ECO:0000250" key="1">
    <source>
        <dbReference type="UniProtKB" id="P62888"/>
    </source>
</evidence>
<evidence type="ECO:0000305" key="2"/>
<sequence length="115" mass="12814">MVAAKKTKKSLESINSRLQLVMKSGKYVLGYKQTLKMIRQGKAKLVILANNCPALRKSEIEYYAMLAKTGVHHYSGNNIELGTACGKYYRVCTLAIIDPGDSDIIRSMPEQTSEK</sequence>
<proteinExistence type="inferred from homology"/>
<dbReference type="EMBL" id="AF297033">
    <property type="protein sequence ID" value="AAG17442.1"/>
    <property type="molecule type" value="mRNA"/>
</dbReference>
<dbReference type="SMR" id="P67884"/>
<dbReference type="OrthoDB" id="1928736at2759"/>
<dbReference type="GO" id="GO:0022625">
    <property type="term" value="C:cytosolic large ribosomal subunit"/>
    <property type="evidence" value="ECO:0007669"/>
    <property type="project" value="InterPro"/>
</dbReference>
<dbReference type="GO" id="GO:0003723">
    <property type="term" value="F:RNA binding"/>
    <property type="evidence" value="ECO:0007669"/>
    <property type="project" value="InterPro"/>
</dbReference>
<dbReference type="GO" id="GO:0003735">
    <property type="term" value="F:structural constituent of ribosome"/>
    <property type="evidence" value="ECO:0007669"/>
    <property type="project" value="InterPro"/>
</dbReference>
<dbReference type="FunFam" id="3.30.1330.30:FF:000001">
    <property type="entry name" value="60S ribosomal protein L30"/>
    <property type="match status" value="1"/>
</dbReference>
<dbReference type="Gene3D" id="3.30.1330.30">
    <property type="match status" value="1"/>
</dbReference>
<dbReference type="HAMAP" id="MF_00481">
    <property type="entry name" value="Ribosomal_eL30"/>
    <property type="match status" value="1"/>
</dbReference>
<dbReference type="InterPro" id="IPR000231">
    <property type="entry name" value="Ribosomal_eL30"/>
</dbReference>
<dbReference type="InterPro" id="IPR039109">
    <property type="entry name" value="Ribosomal_eL30-like"/>
</dbReference>
<dbReference type="InterPro" id="IPR029064">
    <property type="entry name" value="Ribosomal_eL30-like_sf"/>
</dbReference>
<dbReference type="InterPro" id="IPR022991">
    <property type="entry name" value="Ribosomal_eL30_CS"/>
</dbReference>
<dbReference type="InterPro" id="IPR004038">
    <property type="entry name" value="Ribosomal_eL8/eL30/eS12/Gad45"/>
</dbReference>
<dbReference type="NCBIfam" id="NF002172">
    <property type="entry name" value="PRK01018.1"/>
    <property type="match status" value="1"/>
</dbReference>
<dbReference type="PANTHER" id="PTHR11449">
    <property type="entry name" value="RIBOSOMAL PROTEIN L30"/>
    <property type="match status" value="1"/>
</dbReference>
<dbReference type="Pfam" id="PF01248">
    <property type="entry name" value="Ribosomal_L7Ae"/>
    <property type="match status" value="1"/>
</dbReference>
<dbReference type="SUPFAM" id="SSF55315">
    <property type="entry name" value="L30e-like"/>
    <property type="match status" value="1"/>
</dbReference>
<dbReference type="PROSITE" id="PS00709">
    <property type="entry name" value="RIBOSOMAL_L30E_1"/>
    <property type="match status" value="1"/>
</dbReference>
<dbReference type="PROSITE" id="PS00993">
    <property type="entry name" value="RIBOSOMAL_L30E_2"/>
    <property type="match status" value="1"/>
</dbReference>
<comment type="function">
    <text evidence="1">Component of the large ribosomal subunit. The ribosome is a large ribonucleoprotein complex responsible for the synthesis of proteins in the cell.</text>
</comment>
<comment type="subunit">
    <text evidence="1">Component of the large ribosomal subunit.</text>
</comment>
<comment type="subcellular location">
    <subcellularLocation>
        <location evidence="1">Cytoplasm</location>
    </subcellularLocation>
</comment>
<comment type="similarity">
    <text evidence="2">Belongs to the eukaryotic ribosomal protein eL30 family.</text>
</comment>
<protein>
    <recommendedName>
        <fullName evidence="2">Large ribosomal subunit protein eL30</fullName>
    </recommendedName>
    <alternativeName>
        <fullName>60S ribosomal protein L30</fullName>
    </alternativeName>
</protein>
<organism>
    <name type="scientific">Ophiophagus hannah</name>
    <name type="common">King cobra</name>
    <name type="synonym">Naja hannah</name>
    <dbReference type="NCBI Taxonomy" id="8665"/>
    <lineage>
        <taxon>Eukaryota</taxon>
        <taxon>Metazoa</taxon>
        <taxon>Chordata</taxon>
        <taxon>Craniata</taxon>
        <taxon>Vertebrata</taxon>
        <taxon>Euteleostomi</taxon>
        <taxon>Lepidosauria</taxon>
        <taxon>Squamata</taxon>
        <taxon>Bifurcata</taxon>
        <taxon>Unidentata</taxon>
        <taxon>Episquamata</taxon>
        <taxon>Toxicofera</taxon>
        <taxon>Serpentes</taxon>
        <taxon>Colubroidea</taxon>
        <taxon>Elapidae</taxon>
        <taxon>Elapinae</taxon>
        <taxon>Ophiophagus</taxon>
    </lineage>
</organism>
<accession>P67884</accession>
<accession>P47833</accession>
<accession>P58373</accession>
<feature type="chain" id="PRO_0000146125" description="Large ribosomal subunit protein eL30">
    <location>
        <begin position="1"/>
        <end position="115"/>
    </location>
</feature>
<keyword id="KW-0963">Cytoplasm</keyword>
<keyword id="KW-0687">Ribonucleoprotein</keyword>
<keyword id="KW-0689">Ribosomal protein</keyword>
<gene>
    <name type="primary">RPL30</name>
</gene>
<reference key="1">
    <citation type="submission" date="2000-08" db="EMBL/GenBank/DDBJ databases">
        <title>Molecular cloning of a snake ribosomal protein L30 from king cobra (Ophiophagus hannah).</title>
        <authorList>
            <person name="Lee W."/>
            <person name="Zhang Y."/>
        </authorList>
    </citation>
    <scope>NUCLEOTIDE SEQUENCE [MRNA]</scope>
    <source>
        <tissue>Venom gland</tissue>
    </source>
</reference>